<dbReference type="EC" id="3.1.3.16" evidence="7 8 9"/>
<dbReference type="EMBL" id="U10556">
    <property type="protein sequence ID" value="AAB68888.1"/>
    <property type="status" value="ALT_SEQ"/>
    <property type="molecule type" value="Genomic_DNA"/>
</dbReference>
<dbReference type="EMBL" id="EF123135">
    <property type="protein sequence ID" value="ABM97479.1"/>
    <property type="molecule type" value="mRNA"/>
</dbReference>
<dbReference type="EMBL" id="DQ881450">
    <property type="protein sequence ID" value="ABI95877.1"/>
    <property type="molecule type" value="mRNA"/>
</dbReference>
<dbReference type="EMBL" id="BK006934">
    <property type="protein sequence ID" value="DAA06770.1"/>
    <property type="molecule type" value="Genomic_DNA"/>
</dbReference>
<dbReference type="PIR" id="S46810">
    <property type="entry name" value="S46810"/>
</dbReference>
<dbReference type="RefSeq" id="NP_011943.2">
    <property type="nucleotide sequence ID" value="NM_001179206.1"/>
</dbReference>
<dbReference type="SMR" id="P38797"/>
<dbReference type="BioGRID" id="36510">
    <property type="interactions" value="137"/>
</dbReference>
<dbReference type="DIP" id="DIP-6369N"/>
<dbReference type="FunCoup" id="P38797">
    <property type="interactions" value="828"/>
</dbReference>
<dbReference type="IntAct" id="P38797">
    <property type="interactions" value="8"/>
</dbReference>
<dbReference type="MINT" id="P38797"/>
<dbReference type="STRING" id="4932.YHR076W"/>
<dbReference type="PaxDb" id="4932-YHR076W"/>
<dbReference type="PeptideAtlas" id="P38797"/>
<dbReference type="DNASU" id="856475"/>
<dbReference type="EnsemblFungi" id="YHR076W_mRNA">
    <property type="protein sequence ID" value="YHR076W"/>
    <property type="gene ID" value="YHR076W"/>
</dbReference>
<dbReference type="GeneID" id="856475"/>
<dbReference type="KEGG" id="sce:YHR076W"/>
<dbReference type="AGR" id="SGD:S000001118"/>
<dbReference type="SGD" id="S000001118">
    <property type="gene designation" value="PTC7"/>
</dbReference>
<dbReference type="VEuPathDB" id="FungiDB:YHR076W"/>
<dbReference type="eggNOG" id="KOG1379">
    <property type="taxonomic scope" value="Eukaryota"/>
</dbReference>
<dbReference type="GeneTree" id="ENSGT00390000011937"/>
<dbReference type="HOGENOM" id="CLU_029404_7_0_1"/>
<dbReference type="InParanoid" id="P38797"/>
<dbReference type="OMA" id="ANTIAWM"/>
<dbReference type="OrthoDB" id="60843at2759"/>
<dbReference type="BioCyc" id="YEAST:G3O-31123-MONOMER"/>
<dbReference type="SABIO-RK" id="P38797"/>
<dbReference type="BioGRID-ORCS" id="856475">
    <property type="hits" value="1 hit in 10 CRISPR screens"/>
</dbReference>
<dbReference type="PRO" id="PR:P38797"/>
<dbReference type="Proteomes" id="UP000002311">
    <property type="component" value="Chromosome VIII"/>
</dbReference>
<dbReference type="RNAct" id="P38797">
    <property type="molecule type" value="protein"/>
</dbReference>
<dbReference type="GO" id="GO:0005739">
    <property type="term" value="C:mitochondrion"/>
    <property type="evidence" value="ECO:0000314"/>
    <property type="project" value="SGD"/>
</dbReference>
<dbReference type="GO" id="GO:0005635">
    <property type="term" value="C:nuclear envelope"/>
    <property type="evidence" value="ECO:0000314"/>
    <property type="project" value="SGD"/>
</dbReference>
<dbReference type="GO" id="GO:0046872">
    <property type="term" value="F:metal ion binding"/>
    <property type="evidence" value="ECO:0007669"/>
    <property type="project" value="UniProtKB-KW"/>
</dbReference>
<dbReference type="GO" id="GO:0004721">
    <property type="term" value="F:phosphoprotein phosphatase activity"/>
    <property type="evidence" value="ECO:0000314"/>
    <property type="project" value="SGD"/>
</dbReference>
<dbReference type="GO" id="GO:0004722">
    <property type="term" value="F:protein serine/threonine phosphatase activity"/>
    <property type="evidence" value="ECO:0000314"/>
    <property type="project" value="UniProtKB"/>
</dbReference>
<dbReference type="GO" id="GO:0070262">
    <property type="term" value="P:peptidyl-serine dephosphorylation"/>
    <property type="evidence" value="ECO:0000315"/>
    <property type="project" value="UniProtKB"/>
</dbReference>
<dbReference type="GO" id="GO:1904775">
    <property type="term" value="P:positive regulation of ubiquinone biosynthetic process"/>
    <property type="evidence" value="ECO:0000315"/>
    <property type="project" value="UniProtKB"/>
</dbReference>
<dbReference type="CDD" id="cd00143">
    <property type="entry name" value="PP2Cc"/>
    <property type="match status" value="1"/>
</dbReference>
<dbReference type="FunFam" id="3.60.40.10:FF:000093">
    <property type="entry name" value="Type 2C protein Phosphatase"/>
    <property type="match status" value="1"/>
</dbReference>
<dbReference type="Gene3D" id="3.60.40.10">
    <property type="entry name" value="PPM-type phosphatase domain"/>
    <property type="match status" value="1"/>
</dbReference>
<dbReference type="InterPro" id="IPR036457">
    <property type="entry name" value="PPM-type-like_dom_sf"/>
</dbReference>
<dbReference type="InterPro" id="IPR001932">
    <property type="entry name" value="PPM-type_phosphatase-like_dom"/>
</dbReference>
<dbReference type="InterPro" id="IPR039123">
    <property type="entry name" value="PPTC7"/>
</dbReference>
<dbReference type="PANTHER" id="PTHR12320">
    <property type="entry name" value="PROTEIN PHOSPHATASE 2C"/>
    <property type="match status" value="1"/>
</dbReference>
<dbReference type="PANTHER" id="PTHR12320:SF1">
    <property type="entry name" value="PROTEIN PHOSPHATASE PTC7 HOMOLOG"/>
    <property type="match status" value="1"/>
</dbReference>
<dbReference type="Pfam" id="PF07228">
    <property type="entry name" value="SpoIIE"/>
    <property type="match status" value="1"/>
</dbReference>
<dbReference type="SMART" id="SM00331">
    <property type="entry name" value="PP2C_SIG"/>
    <property type="match status" value="1"/>
</dbReference>
<dbReference type="SMART" id="SM00332">
    <property type="entry name" value="PP2Cc"/>
    <property type="match status" value="1"/>
</dbReference>
<dbReference type="SUPFAM" id="SSF81606">
    <property type="entry name" value="PP2C-like"/>
    <property type="match status" value="1"/>
</dbReference>
<dbReference type="PROSITE" id="PS51746">
    <property type="entry name" value="PPM_2"/>
    <property type="match status" value="1"/>
</dbReference>
<protein>
    <recommendedName>
        <fullName>Protein phosphatase 2C homolog 7, mitochondrial</fullName>
        <shortName>PP2C-7</shortName>
        <ecNumber evidence="7 8 9">3.1.3.16</ecNumber>
    </recommendedName>
</protein>
<reference key="1">
    <citation type="journal article" date="1994" name="Science">
        <title>Complete nucleotide sequence of Saccharomyces cerevisiae chromosome VIII.</title>
        <authorList>
            <person name="Johnston M."/>
            <person name="Andrews S."/>
            <person name="Brinkman R."/>
            <person name="Cooper J."/>
            <person name="Ding H."/>
            <person name="Dover J."/>
            <person name="Du Z."/>
            <person name="Favello A."/>
            <person name="Fulton L."/>
            <person name="Gattung S."/>
            <person name="Geisel C."/>
            <person name="Kirsten J."/>
            <person name="Kucaba T."/>
            <person name="Hillier L.W."/>
            <person name="Jier M."/>
            <person name="Johnston L."/>
            <person name="Langston Y."/>
            <person name="Latreille P."/>
            <person name="Louis E.J."/>
            <person name="Macri C."/>
            <person name="Mardis E."/>
            <person name="Menezes S."/>
            <person name="Mouser L."/>
            <person name="Nhan M."/>
            <person name="Rifkin L."/>
            <person name="Riles L."/>
            <person name="St Peter H."/>
            <person name="Trevaskis E."/>
            <person name="Vaughan K."/>
            <person name="Vignati D."/>
            <person name="Wilcox L."/>
            <person name="Wohldman P."/>
            <person name="Waterston R."/>
            <person name="Wilson R."/>
            <person name="Vaudin M."/>
        </authorList>
    </citation>
    <scope>NUCLEOTIDE SEQUENCE [LARGE SCALE GENOMIC DNA]</scope>
    <source>
        <strain>ATCC 204508 / S288c</strain>
    </source>
</reference>
<reference key="2">
    <citation type="journal article" date="2014" name="G3 (Bethesda)">
        <title>The reference genome sequence of Saccharomyces cerevisiae: Then and now.</title>
        <authorList>
            <person name="Engel S.R."/>
            <person name="Dietrich F.S."/>
            <person name="Fisk D.G."/>
            <person name="Binkley G."/>
            <person name="Balakrishnan R."/>
            <person name="Costanzo M.C."/>
            <person name="Dwight S.S."/>
            <person name="Hitz B.C."/>
            <person name="Karra K."/>
            <person name="Nash R.S."/>
            <person name="Weng S."/>
            <person name="Wong E.D."/>
            <person name="Lloyd P."/>
            <person name="Skrzypek M.S."/>
            <person name="Miyasato S.R."/>
            <person name="Simison M."/>
            <person name="Cherry J.M."/>
        </authorList>
    </citation>
    <scope>GENOME REANNOTATION</scope>
    <source>
        <strain>ATCC 204508 / S288c</strain>
    </source>
</reference>
<reference key="3">
    <citation type="journal article" date="2007" name="Proc. Natl. Acad. Sci. U.S.A.">
        <title>High-density yeast-tiling array reveals previously undiscovered introns and extensive regulation of meiotic splicing.</title>
        <authorList>
            <person name="Juneau K."/>
            <person name="Palm C."/>
            <person name="Miranda M."/>
            <person name="Davis R.W."/>
        </authorList>
    </citation>
    <scope>NUCLEOTIDE SEQUENCE [MRNA] OF 1-125</scope>
    <source>
        <strain>ATCC 201390 / BY4743</strain>
    </source>
</reference>
<reference key="4">
    <citation type="journal article" date="2007" name="Genome Res.">
        <title>Genome-wide identification of spliced introns using a tiling microarray.</title>
        <authorList>
            <person name="Zhang Z."/>
            <person name="Hesselberth J.R."/>
            <person name="Fields S."/>
        </authorList>
    </citation>
    <scope>NUCLEOTIDE SEQUENCE [MRNA] OF 5-113</scope>
    <source>
        <strain>ATCC 201390 / BY4743</strain>
    </source>
</reference>
<reference key="5">
    <citation type="journal article" date="2000" name="IUBMB Life">
        <title>Molecular analysis of the Saccharomyces cerevisiae YHR076w gene.</title>
        <authorList>
            <person name="Ramos C.W."/>
            <person name="Gueldener U."/>
            <person name="Klein S."/>
            <person name="Hegemann J.H."/>
            <person name="Gonzalez S."/>
            <person name="Rodriguez-Medina J.R."/>
        </authorList>
    </citation>
    <scope>SUBCELLULAR LOCATION</scope>
</reference>
<reference key="6">
    <citation type="journal article" date="2002" name="FEBS Lett.">
        <title>The YHR076w gene encodes a type 2C protein phosphatase and represents the seventh PP2C gene in budding yeast.</title>
        <authorList>
            <person name="Jiang L."/>
            <person name="Whiteway M."/>
            <person name="Ramos C.W."/>
            <person name="Rodriguez-Medina J.R."/>
            <person name="Shen S.-H."/>
        </authorList>
    </citation>
    <scope>FUNCTION</scope>
</reference>
<reference key="7">
    <citation type="journal article" date="2003" name="Proc. Natl. Acad. Sci. U.S.A.">
        <title>The proteome of Saccharomyces cerevisiae mitochondria.</title>
        <authorList>
            <person name="Sickmann A."/>
            <person name="Reinders J."/>
            <person name="Wagner Y."/>
            <person name="Joppich C."/>
            <person name="Zahedi R.P."/>
            <person name="Meyer H.E."/>
            <person name="Schoenfisch B."/>
            <person name="Perschil I."/>
            <person name="Chacinska A."/>
            <person name="Guiard B."/>
            <person name="Rehling P."/>
            <person name="Pfanner N."/>
            <person name="Meisinger C."/>
        </authorList>
    </citation>
    <scope>SUBCELLULAR LOCATION [LARGE SCALE ANALYSIS]</scope>
    <source>
        <strain>ATCC 76625 / YPH499</strain>
    </source>
</reference>
<reference key="8">
    <citation type="journal article" date="2012" name="Proc. Natl. Acad. Sci. U.S.A.">
        <title>N-terminal acetylome analyses and functional insights of the N-terminal acetyltransferase NatB.</title>
        <authorList>
            <person name="Van Damme P."/>
            <person name="Lasa M."/>
            <person name="Polevoda B."/>
            <person name="Gazquez C."/>
            <person name="Elosegui-Artola A."/>
            <person name="Kim D.S."/>
            <person name="De Juan-Pardo E."/>
            <person name="Demeyer K."/>
            <person name="Hole K."/>
            <person name="Larrea E."/>
            <person name="Timmerman E."/>
            <person name="Prieto J."/>
            <person name="Arnesen T."/>
            <person name="Sherman F."/>
            <person name="Gevaert K."/>
            <person name="Aldabe R."/>
        </authorList>
    </citation>
    <scope>IDENTIFICATION BY MASS SPECTROMETRY [LARGE SCALE ANALYSIS]</scope>
</reference>
<reference key="9">
    <citation type="journal article" date="2013" name="J. Biol. Chem.">
        <title>The phosphatase Ptc7 induces coenzyme Q biosynthesis by activating the hydroxylase Coq7 in yeast.</title>
        <authorList>
            <person name="Martin-Montalvo A."/>
            <person name="Gonzalez-Mariscal I."/>
            <person name="Pomares-Viciana T."/>
            <person name="Padilla-Lopez S."/>
            <person name="Ballesteros M."/>
            <person name="Vazquez-Fonseca L."/>
            <person name="Gandolfo P."/>
            <person name="Brautigan D.L."/>
            <person name="Navas P."/>
            <person name="Santos-Ocana C."/>
        </authorList>
    </citation>
    <scope>FUNCTION</scope>
    <scope>CATALYTIC ACTIVITY</scope>
    <scope>COFACTOR</scope>
    <scope>INDUCTION</scope>
    <scope>DISRUPTION PHENOTYPE</scope>
</reference>
<reference key="10">
    <citation type="journal article" date="2017" name="Cell Rep.">
        <title>Ptc7p Dephosphorylates Select Mitochondrial Proteins to Enhance Metabolic Function.</title>
        <authorList>
            <person name="Guo X."/>
            <person name="Niemi N.M."/>
            <person name="Hutchins P.D."/>
            <person name="Condon S.G.F."/>
            <person name="Jochem A."/>
            <person name="Ulbrich A."/>
            <person name="Higbee A.J."/>
            <person name="Russell J.D."/>
            <person name="Senes A."/>
            <person name="Coon J.J."/>
            <person name="Pagliarini D.J."/>
        </authorList>
    </citation>
    <scope>FUNCTION</scope>
    <scope>CATALYTIC ACTIVITY</scope>
    <scope>COFACTOR</scope>
    <scope>BIOPHYSICOCHEMICAL PROPERTIES</scope>
    <scope>DISRUPTION PHENOTYPE</scope>
    <scope>MUTAGENESIS OF ASP-109 AND ASP-265</scope>
</reference>
<reference key="11">
    <citation type="journal article" date="2018" name="Biochim. Biophys. Acta">
        <title>The mitochondrial phosphatase PPTC7 orchestrates mitochondrial metabolism regulating coenzyme Q10 biosynthesis.</title>
        <authorList>
            <person name="Gonzalez-Mariscal I."/>
            <person name="Martin-Montalvo A."/>
            <person name="Vazquez-Fonseca L."/>
            <person name="Pomares-Viciana T."/>
            <person name="Sanchez-Cuesta A."/>
            <person name="Fernandez-Ayala D.J."/>
            <person name="Navas P."/>
            <person name="Santos-Ocana C."/>
        </authorList>
    </citation>
    <scope>FUNCTION</scope>
    <scope>CATALYTIC ACTIVITY</scope>
    <scope>SUBCELLULAR LOCATION</scope>
</reference>
<name>PP2C7_YEAST</name>
<keyword id="KW-0378">Hydrolase</keyword>
<keyword id="KW-0460">Magnesium</keyword>
<keyword id="KW-0464">Manganese</keyword>
<keyword id="KW-0479">Metal-binding</keyword>
<keyword id="KW-0496">Mitochondrion</keyword>
<keyword id="KW-0904">Protein phosphatase</keyword>
<keyword id="KW-1185">Reference proteome</keyword>
<keyword id="KW-0809">Transit peptide</keyword>
<evidence type="ECO:0000250" key="1">
    <source>
        <dbReference type="UniProtKB" id="P35813"/>
    </source>
</evidence>
<evidence type="ECO:0000255" key="2"/>
<evidence type="ECO:0000255" key="3">
    <source>
        <dbReference type="PROSITE-ProRule" id="PRU01082"/>
    </source>
</evidence>
<evidence type="ECO:0000269" key="4">
    <source>
    </source>
</evidence>
<evidence type="ECO:0000269" key="5">
    <source>
    </source>
</evidence>
<evidence type="ECO:0000269" key="6">
    <source>
    </source>
</evidence>
<evidence type="ECO:0000269" key="7">
    <source>
    </source>
</evidence>
<evidence type="ECO:0000269" key="8">
    <source>
    </source>
</evidence>
<evidence type="ECO:0000269" key="9">
    <source>
    </source>
</evidence>
<evidence type="ECO:0000305" key="10"/>
<feature type="transit peptide" description="Mitochondrion" evidence="2">
    <location>
        <begin position="1"/>
        <end position="39"/>
    </location>
</feature>
<feature type="chain" id="PRO_0000057779" description="Protein phosphatase 2C homolog 7, mitochondrial">
    <location>
        <begin position="40"/>
        <end position="343"/>
    </location>
</feature>
<feature type="domain" description="PPM-type phosphatase" evidence="3">
    <location>
        <begin position="76"/>
        <end position="342"/>
    </location>
</feature>
<feature type="binding site" evidence="8">
    <location>
        <position position="109"/>
    </location>
    <ligand>
        <name>Mn(2+)</name>
        <dbReference type="ChEBI" id="CHEBI:29035"/>
        <label>1</label>
    </ligand>
</feature>
<feature type="binding site" evidence="8">
    <location>
        <position position="109"/>
    </location>
    <ligand>
        <name>Mn(2+)</name>
        <dbReference type="ChEBI" id="CHEBI:29035"/>
        <label>2</label>
    </ligand>
</feature>
<feature type="binding site" evidence="1">
    <location>
        <position position="110"/>
    </location>
    <ligand>
        <name>Mn(2+)</name>
        <dbReference type="ChEBI" id="CHEBI:29035"/>
        <label>1</label>
    </ligand>
</feature>
<feature type="binding site" evidence="8">
    <location>
        <position position="265"/>
    </location>
    <ligand>
        <name>Mn(2+)</name>
        <dbReference type="ChEBI" id="CHEBI:29035"/>
        <label>2</label>
    </ligand>
</feature>
<feature type="mutagenesis site" description="Loss of catalytic activity." evidence="8">
    <original>D</original>
    <variation>A</variation>
    <location>
        <position position="109"/>
    </location>
</feature>
<feature type="mutagenesis site" description="Loss of catalytic activity." evidence="8">
    <original>D</original>
    <variation>A</variation>
    <location>
        <position position="265"/>
    </location>
</feature>
<organism>
    <name type="scientific">Saccharomyces cerevisiae (strain ATCC 204508 / S288c)</name>
    <name type="common">Baker's yeast</name>
    <dbReference type="NCBI Taxonomy" id="559292"/>
    <lineage>
        <taxon>Eukaryota</taxon>
        <taxon>Fungi</taxon>
        <taxon>Dikarya</taxon>
        <taxon>Ascomycota</taxon>
        <taxon>Saccharomycotina</taxon>
        <taxon>Saccharomycetes</taxon>
        <taxon>Saccharomycetales</taxon>
        <taxon>Saccharomycetaceae</taxon>
        <taxon>Saccharomyces</taxon>
    </lineage>
</organism>
<sequence length="343" mass="37782">MFANVGFRTLRVSRGPLYGSCSQIISFSKRTFYSSAKSGYQSNNSHGDAYSSGSQSGPFTYKTAVAFQPKDRDDLIYQKLKDSIRSPTGEDNYFVTSNNVHDIFAGVADGVGGWAEHGYDSSAISRELCKKMDEISTALAENSSKETLLTPKKIIGAAYAKIRDEKVVKVGGTTAIVAHFPSNGKLEVANLGDSWCGVFRDSKLVFQTKFQTVGFNAPYQLSIIPEEMLKEAERRGSKYILNTPRDADEYSFQLKKKDIIILATDGVTDNIATDDIELFLKDNAARTNDELQLLSQKFVDNVVSLSKDPNYPSVFAQEISKLTGKNYSGGKEDDITVVVVRVD</sequence>
<comment type="function">
    <text evidence="5 7 8 9">Protein phosphatase which positively regulates biosynthesis of the ubiquinone, coenzyme Q (PubMed:12220683, PubMed:23940037, PubMed:28076776, PubMed:30267671). Dephosphorylates and activates the ubiquinone biosynthesis protein CAT5/COQ7 (PubMed:23940037, PubMed:30267671). Also dephosphorylates CIT1 on 'Ser-462', which leads to its activation (PubMed:28076776).</text>
</comment>
<comment type="catalytic activity">
    <reaction evidence="7 8">
        <text>O-phospho-L-seryl-[protein] + H2O = L-seryl-[protein] + phosphate</text>
        <dbReference type="Rhea" id="RHEA:20629"/>
        <dbReference type="Rhea" id="RHEA-COMP:9863"/>
        <dbReference type="Rhea" id="RHEA-COMP:11604"/>
        <dbReference type="ChEBI" id="CHEBI:15377"/>
        <dbReference type="ChEBI" id="CHEBI:29999"/>
        <dbReference type="ChEBI" id="CHEBI:43474"/>
        <dbReference type="ChEBI" id="CHEBI:83421"/>
        <dbReference type="EC" id="3.1.3.16"/>
    </reaction>
</comment>
<comment type="catalytic activity">
    <reaction evidence="7 9">
        <text>O-phospho-L-threonyl-[protein] + H2O = L-threonyl-[protein] + phosphate</text>
        <dbReference type="Rhea" id="RHEA:47004"/>
        <dbReference type="Rhea" id="RHEA-COMP:11060"/>
        <dbReference type="Rhea" id="RHEA-COMP:11605"/>
        <dbReference type="ChEBI" id="CHEBI:15377"/>
        <dbReference type="ChEBI" id="CHEBI:30013"/>
        <dbReference type="ChEBI" id="CHEBI:43474"/>
        <dbReference type="ChEBI" id="CHEBI:61977"/>
        <dbReference type="EC" id="3.1.3.16"/>
    </reaction>
</comment>
<comment type="cofactor">
    <cofactor evidence="7 8">
        <name>Mg(2+)</name>
        <dbReference type="ChEBI" id="CHEBI:18420"/>
    </cofactor>
    <cofactor evidence="7 8">
        <name>Mn(2+)</name>
        <dbReference type="ChEBI" id="CHEBI:29035"/>
    </cofactor>
    <text evidence="3">Binds 2 magnesium or manganese ions per subunit.</text>
</comment>
<comment type="biophysicochemical properties">
    <kinetics>
        <KM evidence="8">155.7 uM for phosphorylated CIT1</KM>
        <Vmax evidence="8">218.6 umol/min/ug enzyme</Vmax>
    </kinetics>
</comment>
<comment type="interaction">
    <interactant intactId="EBI-24588">
        <id>P38797</id>
    </interactant>
    <interactant intactId="EBI-16535">
        <id>P24280</id>
        <label>SEC14</label>
    </interactant>
    <organismsDiffer>false</organismsDiffer>
    <experiments>5</experiments>
</comment>
<comment type="subcellular location">
    <subcellularLocation>
        <location evidence="4 6 9">Mitochondrion</location>
    </subcellularLocation>
</comment>
<comment type="induction">
    <text evidence="7">By the presence of non-fermentable carbon sources and oxidative stress.</text>
</comment>
<comment type="disruption phenotype">
    <text evidence="7 8">Decreased growth in non-fermentable sugar mediums (PubMed:23940037, PubMed:28076776). This is caused by a decrease in COQ6 levels, which results in a severe decrease in complex II, NADH-coenzyme Q dehydrogenase to complex III, and complex II to complex III activities in the electron transport chain (PubMed:23940037). Impaired antioxidant defenses (PubMed:23940037). Decreased phosphorylation of CAT5/COQ7 (PubMed:23940037). Increased phosphorylation of CIT1 and decreased citrate synthase activity (PubMed:28076776).</text>
</comment>
<comment type="caution">
    <text evidence="7 8">There are conflicting reports on the effect the deletion of PTC7 causes in cells (PubMed:23940037, PubMed:28076776). In one report, deletion of PTC7 causes decreases in COQ6 levels, and mitochondrial defects observed are thought to be caused by disruption of the COQ6 pathway (PubMed:23940037). In another report, deletion of PTC7 causes no change in COQ6 levels and mitochondrial defects observed in mutants are not thought to be caused by changes in the COQ6 pathway (PubMed:28076776).</text>
</comment>
<comment type="sequence caution" evidence="10">
    <conflict type="erroneous gene model prediction">
        <sequence resource="EMBL-CDS" id="AAB68888"/>
    </conflict>
</comment>
<gene>
    <name type="primary">PTC7</name>
    <name type="ordered locus">YHR076W</name>
</gene>
<proteinExistence type="evidence at protein level"/>
<accession>P38797</accession>
<accession>A2TBN2</accession>
<accession>D3DL26</accession>
<accession>Q06HN3</accession>